<proteinExistence type="inferred from homology"/>
<feature type="chain" id="PRO_1000022969" description="Shikimate kinase">
    <location>
        <begin position="1"/>
        <end position="176"/>
    </location>
</feature>
<feature type="binding site" evidence="1">
    <location>
        <begin position="14"/>
        <end position="19"/>
    </location>
    <ligand>
        <name>ATP</name>
        <dbReference type="ChEBI" id="CHEBI:30616"/>
    </ligand>
</feature>
<feature type="binding site" evidence="1">
    <location>
        <position position="18"/>
    </location>
    <ligand>
        <name>Mg(2+)</name>
        <dbReference type="ChEBI" id="CHEBI:18420"/>
    </ligand>
</feature>
<feature type="binding site" evidence="1">
    <location>
        <position position="36"/>
    </location>
    <ligand>
        <name>substrate</name>
    </ligand>
</feature>
<feature type="binding site" evidence="1">
    <location>
        <position position="60"/>
    </location>
    <ligand>
        <name>substrate</name>
    </ligand>
</feature>
<feature type="binding site" evidence="1">
    <location>
        <position position="83"/>
    </location>
    <ligand>
        <name>substrate</name>
    </ligand>
</feature>
<feature type="binding site" evidence="1">
    <location>
        <position position="121"/>
    </location>
    <ligand>
        <name>ATP</name>
        <dbReference type="ChEBI" id="CHEBI:30616"/>
    </ligand>
</feature>
<feature type="binding site" evidence="1">
    <location>
        <position position="140"/>
    </location>
    <ligand>
        <name>substrate</name>
    </ligand>
</feature>
<accession>A7NBG9</accession>
<dbReference type="EC" id="2.7.1.71" evidence="1"/>
<dbReference type="EMBL" id="CP000803">
    <property type="protein sequence ID" value="ABU61322.1"/>
    <property type="molecule type" value="Genomic_DNA"/>
</dbReference>
<dbReference type="RefSeq" id="WP_003015352.1">
    <property type="nucleotide sequence ID" value="NC_009749.1"/>
</dbReference>
<dbReference type="SMR" id="A7NBG9"/>
<dbReference type="KEGG" id="fta:FTA_0846"/>
<dbReference type="HOGENOM" id="CLU_057607_2_2_6"/>
<dbReference type="UniPathway" id="UPA00053">
    <property type="reaction ID" value="UER00088"/>
</dbReference>
<dbReference type="GO" id="GO:0005829">
    <property type="term" value="C:cytosol"/>
    <property type="evidence" value="ECO:0007669"/>
    <property type="project" value="TreeGrafter"/>
</dbReference>
<dbReference type="GO" id="GO:0005524">
    <property type="term" value="F:ATP binding"/>
    <property type="evidence" value="ECO:0007669"/>
    <property type="project" value="UniProtKB-UniRule"/>
</dbReference>
<dbReference type="GO" id="GO:0000287">
    <property type="term" value="F:magnesium ion binding"/>
    <property type="evidence" value="ECO:0007669"/>
    <property type="project" value="UniProtKB-UniRule"/>
</dbReference>
<dbReference type="GO" id="GO:0004765">
    <property type="term" value="F:shikimate kinase activity"/>
    <property type="evidence" value="ECO:0007669"/>
    <property type="project" value="UniProtKB-UniRule"/>
</dbReference>
<dbReference type="GO" id="GO:0008652">
    <property type="term" value="P:amino acid biosynthetic process"/>
    <property type="evidence" value="ECO:0007669"/>
    <property type="project" value="UniProtKB-KW"/>
</dbReference>
<dbReference type="GO" id="GO:0009073">
    <property type="term" value="P:aromatic amino acid family biosynthetic process"/>
    <property type="evidence" value="ECO:0007669"/>
    <property type="project" value="UniProtKB-KW"/>
</dbReference>
<dbReference type="GO" id="GO:0009423">
    <property type="term" value="P:chorismate biosynthetic process"/>
    <property type="evidence" value="ECO:0007669"/>
    <property type="project" value="UniProtKB-UniRule"/>
</dbReference>
<dbReference type="CDD" id="cd00464">
    <property type="entry name" value="SK"/>
    <property type="match status" value="1"/>
</dbReference>
<dbReference type="Gene3D" id="3.40.50.300">
    <property type="entry name" value="P-loop containing nucleotide triphosphate hydrolases"/>
    <property type="match status" value="1"/>
</dbReference>
<dbReference type="HAMAP" id="MF_00109">
    <property type="entry name" value="Shikimate_kinase"/>
    <property type="match status" value="1"/>
</dbReference>
<dbReference type="InterPro" id="IPR027417">
    <property type="entry name" value="P-loop_NTPase"/>
</dbReference>
<dbReference type="InterPro" id="IPR031322">
    <property type="entry name" value="Shikimate/glucono_kinase"/>
</dbReference>
<dbReference type="InterPro" id="IPR000623">
    <property type="entry name" value="Shikimate_kinase/TSH1"/>
</dbReference>
<dbReference type="InterPro" id="IPR023000">
    <property type="entry name" value="Shikimate_kinase_CS"/>
</dbReference>
<dbReference type="NCBIfam" id="NF003456">
    <property type="entry name" value="PRK05057.1"/>
    <property type="match status" value="1"/>
</dbReference>
<dbReference type="PANTHER" id="PTHR21087">
    <property type="entry name" value="SHIKIMATE KINASE"/>
    <property type="match status" value="1"/>
</dbReference>
<dbReference type="PANTHER" id="PTHR21087:SF16">
    <property type="entry name" value="SHIKIMATE KINASE 1, CHLOROPLASTIC"/>
    <property type="match status" value="1"/>
</dbReference>
<dbReference type="Pfam" id="PF01202">
    <property type="entry name" value="SKI"/>
    <property type="match status" value="1"/>
</dbReference>
<dbReference type="PRINTS" id="PR01100">
    <property type="entry name" value="SHIKIMTKNASE"/>
</dbReference>
<dbReference type="SUPFAM" id="SSF52540">
    <property type="entry name" value="P-loop containing nucleoside triphosphate hydrolases"/>
    <property type="match status" value="1"/>
</dbReference>
<dbReference type="PROSITE" id="PS01128">
    <property type="entry name" value="SHIKIMATE_KINASE"/>
    <property type="match status" value="1"/>
</dbReference>
<gene>
    <name evidence="1" type="primary">aroK</name>
    <name type="ordered locus">FTA_0846</name>
</gene>
<name>AROK_FRATF</name>
<comment type="function">
    <text evidence="1">Catalyzes the specific phosphorylation of the 3-hydroxyl group of shikimic acid using ATP as a cosubstrate.</text>
</comment>
<comment type="catalytic activity">
    <reaction evidence="1">
        <text>shikimate + ATP = 3-phosphoshikimate + ADP + H(+)</text>
        <dbReference type="Rhea" id="RHEA:13121"/>
        <dbReference type="ChEBI" id="CHEBI:15378"/>
        <dbReference type="ChEBI" id="CHEBI:30616"/>
        <dbReference type="ChEBI" id="CHEBI:36208"/>
        <dbReference type="ChEBI" id="CHEBI:145989"/>
        <dbReference type="ChEBI" id="CHEBI:456216"/>
        <dbReference type="EC" id="2.7.1.71"/>
    </reaction>
</comment>
<comment type="cofactor">
    <cofactor evidence="1">
        <name>Mg(2+)</name>
        <dbReference type="ChEBI" id="CHEBI:18420"/>
    </cofactor>
    <text evidence="1">Binds 1 Mg(2+) ion per subunit.</text>
</comment>
<comment type="pathway">
    <text evidence="1">Metabolic intermediate biosynthesis; chorismate biosynthesis; chorismate from D-erythrose 4-phosphate and phosphoenolpyruvate: step 5/7.</text>
</comment>
<comment type="subunit">
    <text evidence="1">Monomer.</text>
</comment>
<comment type="subcellular location">
    <subcellularLocation>
        <location evidence="1">Cytoplasm</location>
    </subcellularLocation>
</comment>
<comment type="similarity">
    <text evidence="1">Belongs to the shikimate kinase family.</text>
</comment>
<keyword id="KW-0028">Amino-acid biosynthesis</keyword>
<keyword id="KW-0057">Aromatic amino acid biosynthesis</keyword>
<keyword id="KW-0067">ATP-binding</keyword>
<keyword id="KW-0963">Cytoplasm</keyword>
<keyword id="KW-0418">Kinase</keyword>
<keyword id="KW-0460">Magnesium</keyword>
<keyword id="KW-0479">Metal-binding</keyword>
<keyword id="KW-0547">Nucleotide-binding</keyword>
<keyword id="KW-0808">Transferase</keyword>
<sequence>MIRTKNIFLIGPVGAGKSTIGKQLAKQLKLEFIDSDDVIEKKCGVDINWIFDLEGEEGFRKREREVISEILAEKQNIVLATGGGAILDPETRSLLSSRGKVVYLEATIEQQLERTSKDTKRPLLRVDDKRPVLEQLMAEREPLYRSIADVVVETNGATVKNIVNKISTFLVEETIL</sequence>
<evidence type="ECO:0000255" key="1">
    <source>
        <dbReference type="HAMAP-Rule" id="MF_00109"/>
    </source>
</evidence>
<reference key="1">
    <citation type="journal article" date="2009" name="PLoS ONE">
        <title>Complete genome sequence of Francisella tularensis subspecies holarctica FTNF002-00.</title>
        <authorList>
            <person name="Barabote R.D."/>
            <person name="Xie G."/>
            <person name="Brettin T.S."/>
            <person name="Hinrichs S.H."/>
            <person name="Fey P.D."/>
            <person name="Jay J.J."/>
            <person name="Engle J.L."/>
            <person name="Godbole S.D."/>
            <person name="Noronha J.M."/>
            <person name="Scheuermann R.H."/>
            <person name="Zhou L.W."/>
            <person name="Lion C."/>
            <person name="Dempsey M.P."/>
        </authorList>
    </citation>
    <scope>NUCLEOTIDE SEQUENCE [LARGE SCALE GENOMIC DNA]</scope>
    <source>
        <strain>FTNF002-00 / FTA</strain>
    </source>
</reference>
<organism>
    <name type="scientific">Francisella tularensis subsp. holarctica (strain FTNF002-00 / FTA)</name>
    <dbReference type="NCBI Taxonomy" id="458234"/>
    <lineage>
        <taxon>Bacteria</taxon>
        <taxon>Pseudomonadati</taxon>
        <taxon>Pseudomonadota</taxon>
        <taxon>Gammaproteobacteria</taxon>
        <taxon>Thiotrichales</taxon>
        <taxon>Francisellaceae</taxon>
        <taxon>Francisella</taxon>
    </lineage>
</organism>
<protein>
    <recommendedName>
        <fullName evidence="1">Shikimate kinase</fullName>
        <shortName evidence="1">SK</shortName>
        <ecNumber evidence="1">2.7.1.71</ecNumber>
    </recommendedName>
</protein>